<name>SYH_KORCO</name>
<evidence type="ECO:0000255" key="1">
    <source>
        <dbReference type="HAMAP-Rule" id="MF_00127"/>
    </source>
</evidence>
<proteinExistence type="inferred from homology"/>
<gene>
    <name evidence="1" type="primary">hisS</name>
    <name type="ordered locus">Kcr_1247</name>
</gene>
<keyword id="KW-0030">Aminoacyl-tRNA synthetase</keyword>
<keyword id="KW-0067">ATP-binding</keyword>
<keyword id="KW-0963">Cytoplasm</keyword>
<keyword id="KW-0436">Ligase</keyword>
<keyword id="KW-0547">Nucleotide-binding</keyword>
<keyword id="KW-0648">Protein biosynthesis</keyword>
<keyword id="KW-1185">Reference proteome</keyword>
<feature type="chain" id="PRO_1000095564" description="Histidine--tRNA ligase">
    <location>
        <begin position="1"/>
        <end position="428"/>
    </location>
</feature>
<sequence length="428" mass="49382">MVSIPRGFRDFPPPMMILRKRVLSKIEEIFRRYGFDPIETPSLEYWETVKGKLGEEAENKLMFIFPDFFSKEWYTLRYELTFPLARYVAMHPETPLPFKRYHIGNVWRHEEPQKGRYREFLQCDADIVGSPYPEADAEVISVNIDAMKSFDFENFRVRLNDRRLLTGVFEEELGINNPFPIYRAIDKLDKIGVDGVKGELARLGAHESLIGRIMELISTRGSFNEISNTFRRIENDKVKVALDHLEEIFSIVSDDRLVFDLSLVRGLDYYTGPVFETSVSEPRIGSLAGGGRYDRLIGLYSGKDVPATGVSLGVERLIDAGLELGIFDLSERSYTDVFIVSVRRENWRYAWRISRILRERGFSTSLDLMRRSQSAQREYANKIGAKVIAFVGPSEEETETVTLYSRDLRKTVKISELIDSLREFLSVS</sequence>
<organism>
    <name type="scientific">Korarchaeum cryptofilum (strain OPF8)</name>
    <dbReference type="NCBI Taxonomy" id="374847"/>
    <lineage>
        <taxon>Archaea</taxon>
        <taxon>Thermoproteota</taxon>
        <taxon>Candidatus Korarchaeia</taxon>
        <taxon>Candidatus Korarchaeales</taxon>
        <taxon>Candidatus Korarchaeaceae</taxon>
        <taxon>Candidatus Korarchaeum</taxon>
    </lineage>
</organism>
<dbReference type="EC" id="6.1.1.21" evidence="1"/>
<dbReference type="EMBL" id="CP000968">
    <property type="protein sequence ID" value="ACB07993.1"/>
    <property type="molecule type" value="Genomic_DNA"/>
</dbReference>
<dbReference type="RefSeq" id="WP_012309890.1">
    <property type="nucleotide sequence ID" value="NC_010482.1"/>
</dbReference>
<dbReference type="SMR" id="B1L6B4"/>
<dbReference type="FunCoup" id="B1L6B4">
    <property type="interactions" value="173"/>
</dbReference>
<dbReference type="STRING" id="374847.Kcr_1247"/>
<dbReference type="EnsemblBacteria" id="ACB07993">
    <property type="protein sequence ID" value="ACB07993"/>
    <property type="gene ID" value="Kcr_1247"/>
</dbReference>
<dbReference type="GeneID" id="6094524"/>
<dbReference type="KEGG" id="kcr:Kcr_1247"/>
<dbReference type="eggNOG" id="arCOG00404">
    <property type="taxonomic scope" value="Archaea"/>
</dbReference>
<dbReference type="HOGENOM" id="CLU_025113_3_0_2"/>
<dbReference type="InParanoid" id="B1L6B4"/>
<dbReference type="OrthoDB" id="8659at2157"/>
<dbReference type="PhylomeDB" id="B1L6B4"/>
<dbReference type="Proteomes" id="UP000001686">
    <property type="component" value="Chromosome"/>
</dbReference>
<dbReference type="GO" id="GO:0005829">
    <property type="term" value="C:cytosol"/>
    <property type="evidence" value="ECO:0000318"/>
    <property type="project" value="GO_Central"/>
</dbReference>
<dbReference type="GO" id="GO:0005524">
    <property type="term" value="F:ATP binding"/>
    <property type="evidence" value="ECO:0007669"/>
    <property type="project" value="UniProtKB-UniRule"/>
</dbReference>
<dbReference type="GO" id="GO:0004821">
    <property type="term" value="F:histidine-tRNA ligase activity"/>
    <property type="evidence" value="ECO:0000318"/>
    <property type="project" value="GO_Central"/>
</dbReference>
<dbReference type="GO" id="GO:0003723">
    <property type="term" value="F:RNA binding"/>
    <property type="evidence" value="ECO:0000318"/>
    <property type="project" value="GO_Central"/>
</dbReference>
<dbReference type="GO" id="GO:0006427">
    <property type="term" value="P:histidyl-tRNA aminoacylation"/>
    <property type="evidence" value="ECO:0000318"/>
    <property type="project" value="GO_Central"/>
</dbReference>
<dbReference type="CDD" id="cd00773">
    <property type="entry name" value="HisRS-like_core"/>
    <property type="match status" value="1"/>
</dbReference>
<dbReference type="Gene3D" id="3.40.50.800">
    <property type="entry name" value="Anticodon-binding domain"/>
    <property type="match status" value="1"/>
</dbReference>
<dbReference type="Gene3D" id="3.30.930.10">
    <property type="entry name" value="Bira Bifunctional Protein, Domain 2"/>
    <property type="match status" value="1"/>
</dbReference>
<dbReference type="HAMAP" id="MF_00127">
    <property type="entry name" value="His_tRNA_synth"/>
    <property type="match status" value="1"/>
</dbReference>
<dbReference type="InterPro" id="IPR006195">
    <property type="entry name" value="aa-tRNA-synth_II"/>
</dbReference>
<dbReference type="InterPro" id="IPR045864">
    <property type="entry name" value="aa-tRNA-synth_II/BPL/LPL"/>
</dbReference>
<dbReference type="InterPro" id="IPR004154">
    <property type="entry name" value="Anticodon-bd"/>
</dbReference>
<dbReference type="InterPro" id="IPR036621">
    <property type="entry name" value="Anticodon-bd_dom_sf"/>
</dbReference>
<dbReference type="InterPro" id="IPR015807">
    <property type="entry name" value="His-tRNA-ligase"/>
</dbReference>
<dbReference type="InterPro" id="IPR041715">
    <property type="entry name" value="HisRS-like_core"/>
</dbReference>
<dbReference type="InterPro" id="IPR004516">
    <property type="entry name" value="HisRS/HisZ"/>
</dbReference>
<dbReference type="NCBIfam" id="TIGR00442">
    <property type="entry name" value="hisS"/>
    <property type="match status" value="1"/>
</dbReference>
<dbReference type="PANTHER" id="PTHR11476:SF7">
    <property type="entry name" value="HISTIDINE--TRNA LIGASE"/>
    <property type="match status" value="1"/>
</dbReference>
<dbReference type="PANTHER" id="PTHR11476">
    <property type="entry name" value="HISTIDYL-TRNA SYNTHETASE"/>
    <property type="match status" value="1"/>
</dbReference>
<dbReference type="Pfam" id="PF03129">
    <property type="entry name" value="HGTP_anticodon"/>
    <property type="match status" value="1"/>
</dbReference>
<dbReference type="Pfam" id="PF13393">
    <property type="entry name" value="tRNA-synt_His"/>
    <property type="match status" value="1"/>
</dbReference>
<dbReference type="PIRSF" id="PIRSF001549">
    <property type="entry name" value="His-tRNA_synth"/>
    <property type="match status" value="1"/>
</dbReference>
<dbReference type="SUPFAM" id="SSF52954">
    <property type="entry name" value="Class II aaRS ABD-related"/>
    <property type="match status" value="1"/>
</dbReference>
<dbReference type="SUPFAM" id="SSF55681">
    <property type="entry name" value="Class II aaRS and biotin synthetases"/>
    <property type="match status" value="1"/>
</dbReference>
<dbReference type="PROSITE" id="PS50862">
    <property type="entry name" value="AA_TRNA_LIGASE_II"/>
    <property type="match status" value="1"/>
</dbReference>
<protein>
    <recommendedName>
        <fullName evidence="1">Histidine--tRNA ligase</fullName>
        <ecNumber evidence="1">6.1.1.21</ecNumber>
    </recommendedName>
    <alternativeName>
        <fullName evidence="1">Histidyl-tRNA synthetase</fullName>
        <shortName evidence="1">HisRS</shortName>
    </alternativeName>
</protein>
<reference key="1">
    <citation type="journal article" date="2008" name="Proc. Natl. Acad. Sci. U.S.A.">
        <title>A korarchaeal genome reveals new insights into the evolution of the Archaea.</title>
        <authorList>
            <person name="Elkins J.G."/>
            <person name="Podar M."/>
            <person name="Graham D.E."/>
            <person name="Makarova K.S."/>
            <person name="Wolf Y."/>
            <person name="Randau L."/>
            <person name="Hedlund B.P."/>
            <person name="Brochier-Armanet C."/>
            <person name="Kunin V."/>
            <person name="Anderson I."/>
            <person name="Lapidus A."/>
            <person name="Goltsman E."/>
            <person name="Barry K."/>
            <person name="Koonin E.V."/>
            <person name="Hugenholtz P."/>
            <person name="Kyrpides N."/>
            <person name="Wanner G."/>
            <person name="Richardson P."/>
            <person name="Keller M."/>
            <person name="Stetter K.O."/>
        </authorList>
    </citation>
    <scope>NUCLEOTIDE SEQUENCE [LARGE SCALE GENOMIC DNA]</scope>
    <source>
        <strain>OPF8</strain>
    </source>
</reference>
<accession>B1L6B4</accession>
<comment type="catalytic activity">
    <reaction evidence="1">
        <text>tRNA(His) + L-histidine + ATP = L-histidyl-tRNA(His) + AMP + diphosphate + H(+)</text>
        <dbReference type="Rhea" id="RHEA:17313"/>
        <dbReference type="Rhea" id="RHEA-COMP:9665"/>
        <dbReference type="Rhea" id="RHEA-COMP:9689"/>
        <dbReference type="ChEBI" id="CHEBI:15378"/>
        <dbReference type="ChEBI" id="CHEBI:30616"/>
        <dbReference type="ChEBI" id="CHEBI:33019"/>
        <dbReference type="ChEBI" id="CHEBI:57595"/>
        <dbReference type="ChEBI" id="CHEBI:78442"/>
        <dbReference type="ChEBI" id="CHEBI:78527"/>
        <dbReference type="ChEBI" id="CHEBI:456215"/>
        <dbReference type="EC" id="6.1.1.21"/>
    </reaction>
</comment>
<comment type="subcellular location">
    <subcellularLocation>
        <location evidence="1">Cytoplasm</location>
    </subcellularLocation>
</comment>
<comment type="similarity">
    <text evidence="1">Belongs to the class-II aminoacyl-tRNA synthetase family.</text>
</comment>